<protein>
    <recommendedName>
        <fullName evidence="1">Protein SlyX</fullName>
    </recommendedName>
</protein>
<gene>
    <name evidence="1" type="primary">slyX</name>
    <name type="ordered locus">YpsIP31758_3927</name>
</gene>
<sequence length="72" mass="8523">MEQSLLEQRLEMLESRLAFQEVTIEELNLIVTEHQMEMTKLREHLRLLTDKLRESQSSMLASPSEETPPPHY</sequence>
<reference key="1">
    <citation type="journal article" date="2007" name="PLoS Genet.">
        <title>The complete genome sequence of Yersinia pseudotuberculosis IP31758, the causative agent of Far East scarlet-like fever.</title>
        <authorList>
            <person name="Eppinger M."/>
            <person name="Rosovitz M.J."/>
            <person name="Fricke W.F."/>
            <person name="Rasko D.A."/>
            <person name="Kokorina G."/>
            <person name="Fayolle C."/>
            <person name="Lindler L.E."/>
            <person name="Carniel E."/>
            <person name="Ravel J."/>
        </authorList>
    </citation>
    <scope>NUCLEOTIDE SEQUENCE [LARGE SCALE GENOMIC DNA]</scope>
    <source>
        <strain>IP 31758</strain>
    </source>
</reference>
<feature type="chain" id="PRO_1000062085" description="Protein SlyX">
    <location>
        <begin position="1"/>
        <end position="72"/>
    </location>
</feature>
<feature type="region of interest" description="Disordered" evidence="2">
    <location>
        <begin position="52"/>
        <end position="72"/>
    </location>
</feature>
<feature type="compositionally biased region" description="Polar residues" evidence="2">
    <location>
        <begin position="55"/>
        <end position="65"/>
    </location>
</feature>
<proteinExistence type="inferred from homology"/>
<dbReference type="EMBL" id="CP000720">
    <property type="protein sequence ID" value="ABS47356.1"/>
    <property type="molecule type" value="Genomic_DNA"/>
</dbReference>
<dbReference type="RefSeq" id="WP_002212317.1">
    <property type="nucleotide sequence ID" value="NC_009708.1"/>
</dbReference>
<dbReference type="SMR" id="A7FNP7"/>
<dbReference type="KEGG" id="ypi:YpsIP31758_3927"/>
<dbReference type="HOGENOM" id="CLU_180796_4_2_6"/>
<dbReference type="Proteomes" id="UP000002412">
    <property type="component" value="Chromosome"/>
</dbReference>
<dbReference type="Gene3D" id="1.20.5.300">
    <property type="match status" value="1"/>
</dbReference>
<dbReference type="HAMAP" id="MF_00715">
    <property type="entry name" value="SlyX"/>
    <property type="match status" value="1"/>
</dbReference>
<dbReference type="InterPro" id="IPR007236">
    <property type="entry name" value="SlyX"/>
</dbReference>
<dbReference type="NCBIfam" id="NF002750">
    <property type="entry name" value="PRK02793.1"/>
    <property type="match status" value="1"/>
</dbReference>
<dbReference type="PANTHER" id="PTHR36508">
    <property type="entry name" value="PROTEIN SLYX"/>
    <property type="match status" value="1"/>
</dbReference>
<dbReference type="PANTHER" id="PTHR36508:SF1">
    <property type="entry name" value="PROTEIN SLYX"/>
    <property type="match status" value="1"/>
</dbReference>
<dbReference type="Pfam" id="PF04102">
    <property type="entry name" value="SlyX"/>
    <property type="match status" value="1"/>
</dbReference>
<comment type="similarity">
    <text evidence="1">Belongs to the SlyX family.</text>
</comment>
<name>SLYX_YERP3</name>
<accession>A7FNP7</accession>
<organism>
    <name type="scientific">Yersinia pseudotuberculosis serotype O:1b (strain IP 31758)</name>
    <dbReference type="NCBI Taxonomy" id="349747"/>
    <lineage>
        <taxon>Bacteria</taxon>
        <taxon>Pseudomonadati</taxon>
        <taxon>Pseudomonadota</taxon>
        <taxon>Gammaproteobacteria</taxon>
        <taxon>Enterobacterales</taxon>
        <taxon>Yersiniaceae</taxon>
        <taxon>Yersinia</taxon>
    </lineage>
</organism>
<evidence type="ECO:0000255" key="1">
    <source>
        <dbReference type="HAMAP-Rule" id="MF_00715"/>
    </source>
</evidence>
<evidence type="ECO:0000256" key="2">
    <source>
        <dbReference type="SAM" id="MobiDB-lite"/>
    </source>
</evidence>